<name>LON_HAEIN</name>
<dbReference type="EC" id="3.4.21.53" evidence="1"/>
<dbReference type="EMBL" id="L42023">
    <property type="protein sequence ID" value="AAC22121.1"/>
    <property type="molecule type" value="Genomic_DNA"/>
</dbReference>
<dbReference type="PIR" id="A64070">
    <property type="entry name" value="A64070"/>
</dbReference>
<dbReference type="RefSeq" id="NP_438623.1">
    <property type="nucleotide sequence ID" value="NC_000907.1"/>
</dbReference>
<dbReference type="SMR" id="P43864"/>
<dbReference type="STRING" id="71421.HI_0462"/>
<dbReference type="MEROPS" id="S16.001"/>
<dbReference type="EnsemblBacteria" id="AAC22121">
    <property type="protein sequence ID" value="AAC22121"/>
    <property type="gene ID" value="HI_0462"/>
</dbReference>
<dbReference type="KEGG" id="hin:HI_0462"/>
<dbReference type="PATRIC" id="fig|71421.8.peg.482"/>
<dbReference type="eggNOG" id="COG0466">
    <property type="taxonomic scope" value="Bacteria"/>
</dbReference>
<dbReference type="HOGENOM" id="CLU_004109_4_3_6"/>
<dbReference type="OrthoDB" id="9803599at2"/>
<dbReference type="PhylomeDB" id="P43864"/>
<dbReference type="BioCyc" id="HINF71421:G1GJ1-478-MONOMER"/>
<dbReference type="Proteomes" id="UP000000579">
    <property type="component" value="Chromosome"/>
</dbReference>
<dbReference type="GO" id="GO:0005737">
    <property type="term" value="C:cytoplasm"/>
    <property type="evidence" value="ECO:0007669"/>
    <property type="project" value="UniProtKB-SubCell"/>
</dbReference>
<dbReference type="GO" id="GO:0005524">
    <property type="term" value="F:ATP binding"/>
    <property type="evidence" value="ECO:0007669"/>
    <property type="project" value="UniProtKB-UniRule"/>
</dbReference>
<dbReference type="GO" id="GO:0016887">
    <property type="term" value="F:ATP hydrolysis activity"/>
    <property type="evidence" value="ECO:0007669"/>
    <property type="project" value="UniProtKB-UniRule"/>
</dbReference>
<dbReference type="GO" id="GO:0004176">
    <property type="term" value="F:ATP-dependent peptidase activity"/>
    <property type="evidence" value="ECO:0007669"/>
    <property type="project" value="UniProtKB-UniRule"/>
</dbReference>
<dbReference type="GO" id="GO:0043565">
    <property type="term" value="F:sequence-specific DNA binding"/>
    <property type="evidence" value="ECO:0007669"/>
    <property type="project" value="UniProtKB-UniRule"/>
</dbReference>
<dbReference type="GO" id="GO:0004252">
    <property type="term" value="F:serine-type endopeptidase activity"/>
    <property type="evidence" value="ECO:0007669"/>
    <property type="project" value="UniProtKB-UniRule"/>
</dbReference>
<dbReference type="GO" id="GO:0034605">
    <property type="term" value="P:cellular response to heat"/>
    <property type="evidence" value="ECO:0007669"/>
    <property type="project" value="UniProtKB-UniRule"/>
</dbReference>
<dbReference type="GO" id="GO:0006515">
    <property type="term" value="P:protein quality control for misfolded or incompletely synthesized proteins"/>
    <property type="evidence" value="ECO:0007669"/>
    <property type="project" value="UniProtKB-UniRule"/>
</dbReference>
<dbReference type="CDD" id="cd19500">
    <property type="entry name" value="RecA-like_Lon"/>
    <property type="match status" value="1"/>
</dbReference>
<dbReference type="FunFam" id="1.10.8.60:FF:000035">
    <property type="entry name" value="Lon protease"/>
    <property type="match status" value="1"/>
</dbReference>
<dbReference type="FunFam" id="3.30.230.10:FF:000010">
    <property type="entry name" value="Lon protease"/>
    <property type="match status" value="1"/>
</dbReference>
<dbReference type="FunFam" id="1.20.5.5270:FF:000002">
    <property type="entry name" value="Lon protease homolog"/>
    <property type="match status" value="1"/>
</dbReference>
<dbReference type="FunFam" id="3.40.50.300:FF:000021">
    <property type="entry name" value="Lon protease homolog"/>
    <property type="match status" value="1"/>
</dbReference>
<dbReference type="Gene3D" id="1.10.8.60">
    <property type="match status" value="1"/>
</dbReference>
<dbReference type="Gene3D" id="1.20.5.5270">
    <property type="match status" value="1"/>
</dbReference>
<dbReference type="Gene3D" id="1.20.58.1480">
    <property type="match status" value="1"/>
</dbReference>
<dbReference type="Gene3D" id="3.30.230.10">
    <property type="match status" value="1"/>
</dbReference>
<dbReference type="Gene3D" id="2.30.130.40">
    <property type="entry name" value="LON domain-like"/>
    <property type="match status" value="1"/>
</dbReference>
<dbReference type="Gene3D" id="3.40.50.300">
    <property type="entry name" value="P-loop containing nucleotide triphosphate hydrolases"/>
    <property type="match status" value="1"/>
</dbReference>
<dbReference type="HAMAP" id="MF_01973">
    <property type="entry name" value="lon_bact"/>
    <property type="match status" value="1"/>
</dbReference>
<dbReference type="InterPro" id="IPR003593">
    <property type="entry name" value="AAA+_ATPase"/>
</dbReference>
<dbReference type="InterPro" id="IPR003959">
    <property type="entry name" value="ATPase_AAA_core"/>
</dbReference>
<dbReference type="InterPro" id="IPR027543">
    <property type="entry name" value="Lon_bac"/>
</dbReference>
<dbReference type="InterPro" id="IPR004815">
    <property type="entry name" value="Lon_bac/euk-typ"/>
</dbReference>
<dbReference type="InterPro" id="IPR054594">
    <property type="entry name" value="Lon_lid"/>
</dbReference>
<dbReference type="InterPro" id="IPR008269">
    <property type="entry name" value="Lon_proteolytic"/>
</dbReference>
<dbReference type="InterPro" id="IPR027065">
    <property type="entry name" value="Lon_Prtase"/>
</dbReference>
<dbReference type="InterPro" id="IPR003111">
    <property type="entry name" value="Lon_prtase_N"/>
</dbReference>
<dbReference type="InterPro" id="IPR046336">
    <property type="entry name" value="Lon_prtase_N_sf"/>
</dbReference>
<dbReference type="InterPro" id="IPR027417">
    <property type="entry name" value="P-loop_NTPase"/>
</dbReference>
<dbReference type="InterPro" id="IPR008268">
    <property type="entry name" value="Peptidase_S16_AS"/>
</dbReference>
<dbReference type="InterPro" id="IPR015947">
    <property type="entry name" value="PUA-like_sf"/>
</dbReference>
<dbReference type="InterPro" id="IPR020568">
    <property type="entry name" value="Ribosomal_Su5_D2-typ_SF"/>
</dbReference>
<dbReference type="InterPro" id="IPR014721">
    <property type="entry name" value="Ribsml_uS5_D2-typ_fold_subgr"/>
</dbReference>
<dbReference type="NCBIfam" id="TIGR00763">
    <property type="entry name" value="lon"/>
    <property type="match status" value="1"/>
</dbReference>
<dbReference type="NCBIfam" id="NF008053">
    <property type="entry name" value="PRK10787.1"/>
    <property type="match status" value="1"/>
</dbReference>
<dbReference type="PANTHER" id="PTHR10046">
    <property type="entry name" value="ATP DEPENDENT LON PROTEASE FAMILY MEMBER"/>
    <property type="match status" value="1"/>
</dbReference>
<dbReference type="Pfam" id="PF00004">
    <property type="entry name" value="AAA"/>
    <property type="match status" value="1"/>
</dbReference>
<dbReference type="Pfam" id="PF05362">
    <property type="entry name" value="Lon_C"/>
    <property type="match status" value="1"/>
</dbReference>
<dbReference type="Pfam" id="PF22667">
    <property type="entry name" value="Lon_lid"/>
    <property type="match status" value="1"/>
</dbReference>
<dbReference type="Pfam" id="PF02190">
    <property type="entry name" value="LON_substr_bdg"/>
    <property type="match status" value="1"/>
</dbReference>
<dbReference type="PIRSF" id="PIRSF001174">
    <property type="entry name" value="Lon_proteas"/>
    <property type="match status" value="1"/>
</dbReference>
<dbReference type="PRINTS" id="PR00830">
    <property type="entry name" value="ENDOLAPTASE"/>
</dbReference>
<dbReference type="SMART" id="SM00382">
    <property type="entry name" value="AAA"/>
    <property type="match status" value="1"/>
</dbReference>
<dbReference type="SMART" id="SM00464">
    <property type="entry name" value="LON"/>
    <property type="match status" value="1"/>
</dbReference>
<dbReference type="SUPFAM" id="SSF52540">
    <property type="entry name" value="P-loop containing nucleoside triphosphate hydrolases"/>
    <property type="match status" value="1"/>
</dbReference>
<dbReference type="SUPFAM" id="SSF88697">
    <property type="entry name" value="PUA domain-like"/>
    <property type="match status" value="1"/>
</dbReference>
<dbReference type="SUPFAM" id="SSF54211">
    <property type="entry name" value="Ribosomal protein S5 domain 2-like"/>
    <property type="match status" value="1"/>
</dbReference>
<dbReference type="PROSITE" id="PS51787">
    <property type="entry name" value="LON_N"/>
    <property type="match status" value="1"/>
</dbReference>
<dbReference type="PROSITE" id="PS51786">
    <property type="entry name" value="LON_PROTEOLYTIC"/>
    <property type="match status" value="1"/>
</dbReference>
<dbReference type="PROSITE" id="PS01046">
    <property type="entry name" value="LON_SER"/>
    <property type="match status" value="1"/>
</dbReference>
<gene>
    <name evidence="1" type="primary">lon</name>
    <name type="synonym">lon-A</name>
    <name type="ordered locus">HI_0462</name>
</gene>
<protein>
    <recommendedName>
        <fullName evidence="1">Lon protease</fullName>
        <ecNumber evidence="1">3.4.21.53</ecNumber>
    </recommendedName>
    <alternativeName>
        <fullName evidence="1">ATP-dependent protease La</fullName>
    </alternativeName>
</protein>
<sequence length="803" mass="89347">MAKNTQRTMPVLPLRDVVVFPYMVMPLFVGRAKSINALEEAMNDDKQILLVSQREADLEEPTPEDLFDVGTIANIIQLLKLPDDTVKVLVEGQNRAKINSLEDGEKCFSAQITPIETTYGDEKELVVAKSAVLSEFENYLTLNKKVPTDILNALQRIDDVDRLADTMAAHLPVSIRHKQNALELANVQERLEYLLGMMESEADILQVEKRIRGRVKKQMEKSQRNYYLNEQIKAIRKEMDGGENEDTIDEVEQLHQKVEAAGMPADVRDKVENELQKLKMMSAMSSEATVIRSYIEWMIQVPWHQRSKVKKDIVKAQQVLDTDHYGLDRVKERILEYLAVQARLNKVKGPILCLVGPPGVGKTSLGQSIANATGRKYVRMALGGVRDEAEIRGHRKTYIGALPGKLIQKMAKVGVKNPLFLLDEIDKMASDMRGDPASALLEVLDPEQNTTFNDHYLEVDYDLSDVMFVATSNSMNIPGPLLDRMEVIRLSGYTEDEKLNIAMRHLLAKQIERNGLKKGELTVEESAILDIIRYYTREAGVRGLEREISKICRKAVKNLLVNPKLKSITVNSDNLHDYLGVKRFEFGKADTQNRIGEVTGLAWTEVGGDLLTIETASVVGKGKLSFTGSLGDVMKESIQAAMTVVRARADKLGINAEFHEKRDIHIHVPDGATPKDGPSAGIAMCTALISCLTGNPVRADVAMTGEISLRGKVLPIGGLKEKLLAAHRGGIKTVLIPKENVKDLEEIPENVKQNLAIHAVETIDEVLGFALENPPEGIEFVKVEAKPKAPRRKVTSKSERAVN</sequence>
<feature type="chain" id="PRO_0000076136" description="Lon protease">
    <location>
        <begin position="1"/>
        <end position="803"/>
    </location>
</feature>
<feature type="domain" description="Lon N-terminal" evidence="3">
    <location>
        <begin position="9"/>
        <end position="202"/>
    </location>
</feature>
<feature type="domain" description="Lon proteolytic" evidence="2">
    <location>
        <begin position="592"/>
        <end position="773"/>
    </location>
</feature>
<feature type="active site" evidence="1">
    <location>
        <position position="679"/>
    </location>
</feature>
<feature type="active site" evidence="1">
    <location>
        <position position="722"/>
    </location>
</feature>
<feature type="binding site" evidence="1">
    <location>
        <begin position="356"/>
        <end position="363"/>
    </location>
    <ligand>
        <name>ATP</name>
        <dbReference type="ChEBI" id="CHEBI:30616"/>
    </ligand>
</feature>
<comment type="function">
    <text evidence="1">ATP-dependent serine protease that mediates the selective degradation of mutant and abnormal proteins as well as certain short-lived regulatory proteins. Required for cellular homeostasis and for survival from DNA damage and developmental changes induced by stress. Degrades polypeptides processively to yield small peptide fragments that are 5 to 10 amino acids long. Binds to DNA in a double-stranded, site-specific manner.</text>
</comment>
<comment type="catalytic activity">
    <reaction evidence="1">
        <text>Hydrolysis of proteins in presence of ATP.</text>
        <dbReference type="EC" id="3.4.21.53"/>
    </reaction>
</comment>
<comment type="subunit">
    <text evidence="1">Homohexamer. Organized in a ring with a central cavity.</text>
</comment>
<comment type="subcellular location">
    <subcellularLocation>
        <location>Cytoplasm</location>
    </subcellularLocation>
</comment>
<comment type="induction">
    <text evidence="1">By heat shock.</text>
</comment>
<comment type="similarity">
    <text evidence="1">Belongs to the peptidase S16 family.</text>
</comment>
<reference key="1">
    <citation type="journal article" date="1995" name="Science">
        <title>Whole-genome random sequencing and assembly of Haemophilus influenzae Rd.</title>
        <authorList>
            <person name="Fleischmann R.D."/>
            <person name="Adams M.D."/>
            <person name="White O."/>
            <person name="Clayton R.A."/>
            <person name="Kirkness E.F."/>
            <person name="Kerlavage A.R."/>
            <person name="Bult C.J."/>
            <person name="Tomb J.-F."/>
            <person name="Dougherty B.A."/>
            <person name="Merrick J.M."/>
            <person name="McKenney K."/>
            <person name="Sutton G.G."/>
            <person name="FitzHugh W."/>
            <person name="Fields C.A."/>
            <person name="Gocayne J.D."/>
            <person name="Scott J.D."/>
            <person name="Shirley R."/>
            <person name="Liu L.-I."/>
            <person name="Glodek A."/>
            <person name="Kelley J.M."/>
            <person name="Weidman J.F."/>
            <person name="Phillips C.A."/>
            <person name="Spriggs T."/>
            <person name="Hedblom E."/>
            <person name="Cotton M.D."/>
            <person name="Utterback T.R."/>
            <person name="Hanna M.C."/>
            <person name="Nguyen D.T."/>
            <person name="Saudek D.M."/>
            <person name="Brandon R.C."/>
            <person name="Fine L.D."/>
            <person name="Fritchman J.L."/>
            <person name="Fuhrmann J.L."/>
            <person name="Geoghagen N.S.M."/>
            <person name="Gnehm C.L."/>
            <person name="McDonald L.A."/>
            <person name="Small K.V."/>
            <person name="Fraser C.M."/>
            <person name="Smith H.O."/>
            <person name="Venter J.C."/>
        </authorList>
    </citation>
    <scope>NUCLEOTIDE SEQUENCE [LARGE SCALE GENOMIC DNA]</scope>
    <source>
        <strain>ATCC 51907 / DSM 11121 / KW20 / Rd</strain>
    </source>
</reference>
<accession>P43864</accession>
<evidence type="ECO:0000255" key="1">
    <source>
        <dbReference type="HAMAP-Rule" id="MF_01973"/>
    </source>
</evidence>
<evidence type="ECO:0000255" key="2">
    <source>
        <dbReference type="PROSITE-ProRule" id="PRU01122"/>
    </source>
</evidence>
<evidence type="ECO:0000255" key="3">
    <source>
        <dbReference type="PROSITE-ProRule" id="PRU01123"/>
    </source>
</evidence>
<organism>
    <name type="scientific">Haemophilus influenzae (strain ATCC 51907 / DSM 11121 / KW20 / Rd)</name>
    <dbReference type="NCBI Taxonomy" id="71421"/>
    <lineage>
        <taxon>Bacteria</taxon>
        <taxon>Pseudomonadati</taxon>
        <taxon>Pseudomonadota</taxon>
        <taxon>Gammaproteobacteria</taxon>
        <taxon>Pasteurellales</taxon>
        <taxon>Pasteurellaceae</taxon>
        <taxon>Haemophilus</taxon>
    </lineage>
</organism>
<proteinExistence type="inferred from homology"/>
<keyword id="KW-0067">ATP-binding</keyword>
<keyword id="KW-0963">Cytoplasm</keyword>
<keyword id="KW-0378">Hydrolase</keyword>
<keyword id="KW-0547">Nucleotide-binding</keyword>
<keyword id="KW-0645">Protease</keyword>
<keyword id="KW-1185">Reference proteome</keyword>
<keyword id="KW-0720">Serine protease</keyword>
<keyword id="KW-0346">Stress response</keyword>